<dbReference type="EC" id="3.4.21.92" evidence="1"/>
<dbReference type="EMBL" id="CP001488">
    <property type="protein sequence ID" value="ACO00889.1"/>
    <property type="molecule type" value="Genomic_DNA"/>
</dbReference>
<dbReference type="RefSeq" id="WP_004683830.1">
    <property type="nucleotide sequence ID" value="NC_012441.1"/>
</dbReference>
<dbReference type="SMR" id="C0RJ81"/>
<dbReference type="MEROPS" id="S14.001"/>
<dbReference type="KEGG" id="bmi:BMEA_A1154"/>
<dbReference type="HOGENOM" id="CLU_058707_3_2_5"/>
<dbReference type="Proteomes" id="UP000001748">
    <property type="component" value="Chromosome I"/>
</dbReference>
<dbReference type="GO" id="GO:0005737">
    <property type="term" value="C:cytoplasm"/>
    <property type="evidence" value="ECO:0007669"/>
    <property type="project" value="UniProtKB-SubCell"/>
</dbReference>
<dbReference type="GO" id="GO:0009368">
    <property type="term" value="C:endopeptidase Clp complex"/>
    <property type="evidence" value="ECO:0007669"/>
    <property type="project" value="TreeGrafter"/>
</dbReference>
<dbReference type="GO" id="GO:0004176">
    <property type="term" value="F:ATP-dependent peptidase activity"/>
    <property type="evidence" value="ECO:0007669"/>
    <property type="project" value="InterPro"/>
</dbReference>
<dbReference type="GO" id="GO:0051117">
    <property type="term" value="F:ATPase binding"/>
    <property type="evidence" value="ECO:0007669"/>
    <property type="project" value="TreeGrafter"/>
</dbReference>
<dbReference type="GO" id="GO:0004252">
    <property type="term" value="F:serine-type endopeptidase activity"/>
    <property type="evidence" value="ECO:0007669"/>
    <property type="project" value="UniProtKB-UniRule"/>
</dbReference>
<dbReference type="GO" id="GO:0006515">
    <property type="term" value="P:protein quality control for misfolded or incompletely synthesized proteins"/>
    <property type="evidence" value="ECO:0007669"/>
    <property type="project" value="TreeGrafter"/>
</dbReference>
<dbReference type="CDD" id="cd07017">
    <property type="entry name" value="S14_ClpP_2"/>
    <property type="match status" value="1"/>
</dbReference>
<dbReference type="FunFam" id="3.90.226.10:FF:000001">
    <property type="entry name" value="ATP-dependent Clp protease proteolytic subunit"/>
    <property type="match status" value="1"/>
</dbReference>
<dbReference type="Gene3D" id="3.90.226.10">
    <property type="entry name" value="2-enoyl-CoA Hydratase, Chain A, domain 1"/>
    <property type="match status" value="1"/>
</dbReference>
<dbReference type="HAMAP" id="MF_00444">
    <property type="entry name" value="ClpP"/>
    <property type="match status" value="1"/>
</dbReference>
<dbReference type="InterPro" id="IPR001907">
    <property type="entry name" value="ClpP"/>
</dbReference>
<dbReference type="InterPro" id="IPR029045">
    <property type="entry name" value="ClpP/crotonase-like_dom_sf"/>
</dbReference>
<dbReference type="InterPro" id="IPR023562">
    <property type="entry name" value="ClpP/TepA"/>
</dbReference>
<dbReference type="InterPro" id="IPR018215">
    <property type="entry name" value="ClpP_Ser_AS"/>
</dbReference>
<dbReference type="NCBIfam" id="NF001368">
    <property type="entry name" value="PRK00277.1"/>
    <property type="match status" value="1"/>
</dbReference>
<dbReference type="NCBIfam" id="NF009205">
    <property type="entry name" value="PRK12553.1"/>
    <property type="match status" value="1"/>
</dbReference>
<dbReference type="PANTHER" id="PTHR10381">
    <property type="entry name" value="ATP-DEPENDENT CLP PROTEASE PROTEOLYTIC SUBUNIT"/>
    <property type="match status" value="1"/>
</dbReference>
<dbReference type="PANTHER" id="PTHR10381:SF70">
    <property type="entry name" value="ATP-DEPENDENT CLP PROTEASE PROTEOLYTIC SUBUNIT"/>
    <property type="match status" value="1"/>
</dbReference>
<dbReference type="Pfam" id="PF00574">
    <property type="entry name" value="CLP_protease"/>
    <property type="match status" value="1"/>
</dbReference>
<dbReference type="PRINTS" id="PR00127">
    <property type="entry name" value="CLPPROTEASEP"/>
</dbReference>
<dbReference type="SUPFAM" id="SSF52096">
    <property type="entry name" value="ClpP/crotonase"/>
    <property type="match status" value="1"/>
</dbReference>
<dbReference type="PROSITE" id="PS00381">
    <property type="entry name" value="CLP_PROTEASE_SER"/>
    <property type="match status" value="1"/>
</dbReference>
<feature type="chain" id="PRO_1000135148" description="ATP-dependent Clp protease proteolytic subunit">
    <location>
        <begin position="1"/>
        <end position="209"/>
    </location>
</feature>
<feature type="active site" description="Nucleophile" evidence="1">
    <location>
        <position position="106"/>
    </location>
</feature>
<feature type="active site" evidence="1">
    <location>
        <position position="131"/>
    </location>
</feature>
<reference key="1">
    <citation type="submission" date="2009-03" db="EMBL/GenBank/DDBJ databases">
        <title>Brucella melitensis ATCC 23457 whole genome shotgun sequencing project.</title>
        <authorList>
            <person name="Setubal J.C."/>
            <person name="Boyle S."/>
            <person name="Crasta O.R."/>
            <person name="Gillespie J.J."/>
            <person name="Kenyon R.W."/>
            <person name="Lu J."/>
            <person name="Mane S."/>
            <person name="Nagrani S."/>
            <person name="Shallom J.M."/>
            <person name="Shallom S."/>
            <person name="Shukla M."/>
            <person name="Snyder E.E."/>
            <person name="Sobral B.W."/>
            <person name="Wattam A.R."/>
            <person name="Will R."/>
            <person name="Williams K."/>
            <person name="Yoo H."/>
            <person name="Munk C."/>
            <person name="Tapia R."/>
            <person name="Han C."/>
            <person name="Detter J.C."/>
            <person name="Bruce D."/>
            <person name="Brettin T.S."/>
        </authorList>
    </citation>
    <scope>NUCLEOTIDE SEQUENCE [LARGE SCALE GENOMIC DNA]</scope>
    <source>
        <strain>ATCC 23457</strain>
    </source>
</reference>
<proteinExistence type="inferred from homology"/>
<sequence>MRDPIETVMNLVPMVVEQTNRGERAYDIFSRLLKERIIFVNGPVEDGMSMLVCAQLLFLEAENPKKEINMYINSPGGVVTSGMAIYDTMQFIRPPVSTLCMGQAASMGSLLLTAGATGHRYALLNARIMVHQPSGGFQGQASDIERHAQDIIKMKRRLNEIYVKHTGRDYDTIERTLDRDHFMTAQEALEFGLIDKVVEARDVSADESK</sequence>
<name>CLPP_BRUMB</name>
<protein>
    <recommendedName>
        <fullName evidence="1">ATP-dependent Clp protease proteolytic subunit</fullName>
        <ecNumber evidence="1">3.4.21.92</ecNumber>
    </recommendedName>
    <alternativeName>
        <fullName evidence="1">Endopeptidase Clp</fullName>
    </alternativeName>
</protein>
<keyword id="KW-0963">Cytoplasm</keyword>
<keyword id="KW-0378">Hydrolase</keyword>
<keyword id="KW-0645">Protease</keyword>
<keyword id="KW-0720">Serine protease</keyword>
<organism>
    <name type="scientific">Brucella melitensis biotype 2 (strain ATCC 23457)</name>
    <dbReference type="NCBI Taxonomy" id="546272"/>
    <lineage>
        <taxon>Bacteria</taxon>
        <taxon>Pseudomonadati</taxon>
        <taxon>Pseudomonadota</taxon>
        <taxon>Alphaproteobacteria</taxon>
        <taxon>Hyphomicrobiales</taxon>
        <taxon>Brucellaceae</taxon>
        <taxon>Brucella/Ochrobactrum group</taxon>
        <taxon>Brucella</taxon>
    </lineage>
</organism>
<accession>C0RJ81</accession>
<evidence type="ECO:0000255" key="1">
    <source>
        <dbReference type="HAMAP-Rule" id="MF_00444"/>
    </source>
</evidence>
<comment type="function">
    <text evidence="1">Cleaves peptides in various proteins in a process that requires ATP hydrolysis. Has a chymotrypsin-like activity. Plays a major role in the degradation of misfolded proteins.</text>
</comment>
<comment type="catalytic activity">
    <reaction evidence="1">
        <text>Hydrolysis of proteins to small peptides in the presence of ATP and magnesium. alpha-casein is the usual test substrate. In the absence of ATP, only oligopeptides shorter than five residues are hydrolyzed (such as succinyl-Leu-Tyr-|-NHMec, and Leu-Tyr-Leu-|-Tyr-Trp, in which cleavage of the -Tyr-|-Leu- and -Tyr-|-Trp bonds also occurs).</text>
        <dbReference type="EC" id="3.4.21.92"/>
    </reaction>
</comment>
<comment type="subunit">
    <text evidence="1">Fourteen ClpP subunits assemble into 2 heptameric rings which stack back to back to give a disk-like structure with a central cavity, resembling the structure of eukaryotic proteasomes.</text>
</comment>
<comment type="subcellular location">
    <subcellularLocation>
        <location evidence="1">Cytoplasm</location>
    </subcellularLocation>
</comment>
<comment type="similarity">
    <text evidence="1">Belongs to the peptidase S14 family.</text>
</comment>
<gene>
    <name evidence="1" type="primary">clpP</name>
    <name type="ordered locus">BMEA_A1154</name>
</gene>